<evidence type="ECO:0000255" key="1">
    <source>
        <dbReference type="HAMAP-Rule" id="MF_00014"/>
    </source>
</evidence>
<accession>Q5FA58</accession>
<reference key="1">
    <citation type="submission" date="2003-03" db="EMBL/GenBank/DDBJ databases">
        <title>The complete genome sequence of Neisseria gonorrhoeae.</title>
        <authorList>
            <person name="Lewis L.A."/>
            <person name="Gillaspy A.F."/>
            <person name="McLaughlin R.E."/>
            <person name="Gipson M."/>
            <person name="Ducey T.F."/>
            <person name="Ownbey T."/>
            <person name="Hartman K."/>
            <person name="Nydick C."/>
            <person name="Carson M.B."/>
            <person name="Vaughn J."/>
            <person name="Thomson C."/>
            <person name="Song L."/>
            <person name="Lin S."/>
            <person name="Yuan X."/>
            <person name="Najar F."/>
            <person name="Zhan M."/>
            <person name="Ren Q."/>
            <person name="Zhu H."/>
            <person name="Qi S."/>
            <person name="Kenton S.M."/>
            <person name="Lai H."/>
            <person name="White J.D."/>
            <person name="Clifton S."/>
            <person name="Roe B.A."/>
            <person name="Dyer D.W."/>
        </authorList>
    </citation>
    <scope>NUCLEOTIDE SEQUENCE [LARGE SCALE GENOMIC DNA]</scope>
    <source>
        <strain>ATCC 700825 / FA 1090</strain>
    </source>
</reference>
<comment type="function">
    <text evidence="1">An accessory protein needed during the final step in the assembly of 30S ribosomal subunit, possibly for assembly of the head region. Essential for efficient processing of 16S rRNA. May be needed both before and after RbfA during the maturation of 16S rRNA. It has affinity for free ribosomal 30S subunits but not for 70S ribosomes.</text>
</comment>
<comment type="subunit">
    <text evidence="1">Binds ribosomal protein uS19.</text>
</comment>
<comment type="subcellular location">
    <subcellularLocation>
        <location evidence="1">Cytoplasm</location>
    </subcellularLocation>
</comment>
<comment type="domain">
    <text evidence="1">The PRC barrel domain binds ribosomal protein uS19.</text>
</comment>
<comment type="similarity">
    <text evidence="1">Belongs to the RimM family.</text>
</comment>
<sequence length="169" mass="18756">MTDTQNRVAMGYIKGVFGIKGWLKIAANTEYSDSLLDYPEWHLAKDGKTVSVTLEAGKVVNGELQVKFEGIDDRDSAFSLRGYTIEIPREAFAPTEEDEYYWADLVGMTVVNKDDTVLGKVSNLMETGANDVLMIDGEHGQILIPFVSQYIETVDTGSKTITADWGLDY</sequence>
<feature type="chain" id="PRO_0000163321" description="Ribosome maturation factor RimM">
    <location>
        <begin position="1"/>
        <end position="169"/>
    </location>
</feature>
<feature type="domain" description="PRC barrel" evidence="1">
    <location>
        <begin position="97"/>
        <end position="169"/>
    </location>
</feature>
<proteinExistence type="inferred from homology"/>
<name>RIMM_NEIG1</name>
<gene>
    <name evidence="1" type="primary">rimM</name>
    <name type="ordered locus">NGO_0173</name>
</gene>
<dbReference type="EMBL" id="AE004969">
    <property type="protein sequence ID" value="AAW88929.1"/>
    <property type="molecule type" value="Genomic_DNA"/>
</dbReference>
<dbReference type="RefSeq" id="WP_003690619.1">
    <property type="nucleotide sequence ID" value="NC_002946.2"/>
</dbReference>
<dbReference type="RefSeq" id="YP_207341.1">
    <property type="nucleotide sequence ID" value="NC_002946.2"/>
</dbReference>
<dbReference type="SMR" id="Q5FA58"/>
<dbReference type="STRING" id="242231.NGO_0173"/>
<dbReference type="GeneID" id="66752435"/>
<dbReference type="KEGG" id="ngo:NGO_0173"/>
<dbReference type="PATRIC" id="fig|242231.10.peg.217"/>
<dbReference type="HOGENOM" id="CLU_077636_1_0_4"/>
<dbReference type="Proteomes" id="UP000000535">
    <property type="component" value="Chromosome"/>
</dbReference>
<dbReference type="GO" id="GO:0005737">
    <property type="term" value="C:cytoplasm"/>
    <property type="evidence" value="ECO:0007669"/>
    <property type="project" value="UniProtKB-SubCell"/>
</dbReference>
<dbReference type="GO" id="GO:0005840">
    <property type="term" value="C:ribosome"/>
    <property type="evidence" value="ECO:0007669"/>
    <property type="project" value="InterPro"/>
</dbReference>
<dbReference type="GO" id="GO:0043022">
    <property type="term" value="F:ribosome binding"/>
    <property type="evidence" value="ECO:0007669"/>
    <property type="project" value="InterPro"/>
</dbReference>
<dbReference type="GO" id="GO:0042274">
    <property type="term" value="P:ribosomal small subunit biogenesis"/>
    <property type="evidence" value="ECO:0007669"/>
    <property type="project" value="UniProtKB-UniRule"/>
</dbReference>
<dbReference type="GO" id="GO:0006364">
    <property type="term" value="P:rRNA processing"/>
    <property type="evidence" value="ECO:0007669"/>
    <property type="project" value="UniProtKB-UniRule"/>
</dbReference>
<dbReference type="Gene3D" id="2.30.30.240">
    <property type="entry name" value="PRC-barrel domain"/>
    <property type="match status" value="1"/>
</dbReference>
<dbReference type="Gene3D" id="2.40.30.60">
    <property type="entry name" value="RimM"/>
    <property type="match status" value="1"/>
</dbReference>
<dbReference type="HAMAP" id="MF_00014">
    <property type="entry name" value="Ribosome_mat_RimM"/>
    <property type="match status" value="1"/>
</dbReference>
<dbReference type="InterPro" id="IPR011033">
    <property type="entry name" value="PRC_barrel-like_sf"/>
</dbReference>
<dbReference type="InterPro" id="IPR056792">
    <property type="entry name" value="PRC_RimM"/>
</dbReference>
<dbReference type="InterPro" id="IPR011961">
    <property type="entry name" value="RimM"/>
</dbReference>
<dbReference type="InterPro" id="IPR002676">
    <property type="entry name" value="RimM_N"/>
</dbReference>
<dbReference type="InterPro" id="IPR036976">
    <property type="entry name" value="RimM_N_sf"/>
</dbReference>
<dbReference type="InterPro" id="IPR009000">
    <property type="entry name" value="Transl_B-barrel_sf"/>
</dbReference>
<dbReference type="NCBIfam" id="TIGR02273">
    <property type="entry name" value="16S_RimM"/>
    <property type="match status" value="1"/>
</dbReference>
<dbReference type="PANTHER" id="PTHR33692">
    <property type="entry name" value="RIBOSOME MATURATION FACTOR RIMM"/>
    <property type="match status" value="1"/>
</dbReference>
<dbReference type="PANTHER" id="PTHR33692:SF1">
    <property type="entry name" value="RIBOSOME MATURATION FACTOR RIMM"/>
    <property type="match status" value="1"/>
</dbReference>
<dbReference type="Pfam" id="PF24986">
    <property type="entry name" value="PRC_RimM"/>
    <property type="match status" value="1"/>
</dbReference>
<dbReference type="Pfam" id="PF01782">
    <property type="entry name" value="RimM"/>
    <property type="match status" value="1"/>
</dbReference>
<dbReference type="SUPFAM" id="SSF50346">
    <property type="entry name" value="PRC-barrel domain"/>
    <property type="match status" value="1"/>
</dbReference>
<dbReference type="SUPFAM" id="SSF50447">
    <property type="entry name" value="Translation proteins"/>
    <property type="match status" value="1"/>
</dbReference>
<protein>
    <recommendedName>
        <fullName evidence="1">Ribosome maturation factor RimM</fullName>
    </recommendedName>
</protein>
<keyword id="KW-0143">Chaperone</keyword>
<keyword id="KW-0963">Cytoplasm</keyword>
<keyword id="KW-1185">Reference proteome</keyword>
<keyword id="KW-0690">Ribosome biogenesis</keyword>
<keyword id="KW-0698">rRNA processing</keyword>
<organism>
    <name type="scientific">Neisseria gonorrhoeae (strain ATCC 700825 / FA 1090)</name>
    <dbReference type="NCBI Taxonomy" id="242231"/>
    <lineage>
        <taxon>Bacteria</taxon>
        <taxon>Pseudomonadati</taxon>
        <taxon>Pseudomonadota</taxon>
        <taxon>Betaproteobacteria</taxon>
        <taxon>Neisseriales</taxon>
        <taxon>Neisseriaceae</taxon>
        <taxon>Neisseria</taxon>
    </lineage>
</organism>